<dbReference type="EMBL" id="AP009256">
    <property type="protein sequence ID" value="BAF39311.1"/>
    <property type="molecule type" value="Genomic_DNA"/>
</dbReference>
<dbReference type="RefSeq" id="WP_003808601.1">
    <property type="nucleotide sequence ID" value="NZ_CAXVNC010000001.1"/>
</dbReference>
<dbReference type="SMR" id="A1A0S8"/>
<dbReference type="STRING" id="367928.BAD_0530"/>
<dbReference type="PaxDb" id="1680-BADO_0542"/>
<dbReference type="GeneID" id="97501629"/>
<dbReference type="KEGG" id="bad:BAD_0530"/>
<dbReference type="HOGENOM" id="CLU_104295_1_2_11"/>
<dbReference type="Proteomes" id="UP000008702">
    <property type="component" value="Chromosome"/>
</dbReference>
<dbReference type="GO" id="GO:0015935">
    <property type="term" value="C:small ribosomal subunit"/>
    <property type="evidence" value="ECO:0007669"/>
    <property type="project" value="InterPro"/>
</dbReference>
<dbReference type="GO" id="GO:0019843">
    <property type="term" value="F:rRNA binding"/>
    <property type="evidence" value="ECO:0007669"/>
    <property type="project" value="UniProtKB-UniRule"/>
</dbReference>
<dbReference type="GO" id="GO:0003735">
    <property type="term" value="F:structural constituent of ribosome"/>
    <property type="evidence" value="ECO:0007669"/>
    <property type="project" value="InterPro"/>
</dbReference>
<dbReference type="GO" id="GO:0000049">
    <property type="term" value="F:tRNA binding"/>
    <property type="evidence" value="ECO:0007669"/>
    <property type="project" value="UniProtKB-UniRule"/>
</dbReference>
<dbReference type="GO" id="GO:0006412">
    <property type="term" value="P:translation"/>
    <property type="evidence" value="ECO:0007669"/>
    <property type="project" value="UniProtKB-UniRule"/>
</dbReference>
<dbReference type="CDD" id="cd03368">
    <property type="entry name" value="Ribosomal_S12"/>
    <property type="match status" value="1"/>
</dbReference>
<dbReference type="FunFam" id="2.40.50.140:FF:000001">
    <property type="entry name" value="30S ribosomal protein S12"/>
    <property type="match status" value="1"/>
</dbReference>
<dbReference type="Gene3D" id="2.40.50.140">
    <property type="entry name" value="Nucleic acid-binding proteins"/>
    <property type="match status" value="1"/>
</dbReference>
<dbReference type="HAMAP" id="MF_00403_B">
    <property type="entry name" value="Ribosomal_uS12_B"/>
    <property type="match status" value="1"/>
</dbReference>
<dbReference type="InterPro" id="IPR012340">
    <property type="entry name" value="NA-bd_OB-fold"/>
</dbReference>
<dbReference type="InterPro" id="IPR006032">
    <property type="entry name" value="Ribosomal_uS12"/>
</dbReference>
<dbReference type="InterPro" id="IPR005679">
    <property type="entry name" value="Ribosomal_uS12_bac"/>
</dbReference>
<dbReference type="NCBIfam" id="TIGR00981">
    <property type="entry name" value="rpsL_bact"/>
    <property type="match status" value="1"/>
</dbReference>
<dbReference type="PANTHER" id="PTHR11652">
    <property type="entry name" value="30S RIBOSOMAL PROTEIN S12 FAMILY MEMBER"/>
    <property type="match status" value="1"/>
</dbReference>
<dbReference type="Pfam" id="PF00164">
    <property type="entry name" value="Ribosom_S12_S23"/>
    <property type="match status" value="1"/>
</dbReference>
<dbReference type="PIRSF" id="PIRSF002133">
    <property type="entry name" value="Ribosomal_S12/S23"/>
    <property type="match status" value="1"/>
</dbReference>
<dbReference type="PRINTS" id="PR01034">
    <property type="entry name" value="RIBOSOMALS12"/>
</dbReference>
<dbReference type="SUPFAM" id="SSF50249">
    <property type="entry name" value="Nucleic acid-binding proteins"/>
    <property type="match status" value="1"/>
</dbReference>
<dbReference type="PROSITE" id="PS00055">
    <property type="entry name" value="RIBOSOMAL_S12"/>
    <property type="match status" value="1"/>
</dbReference>
<sequence length="123" mass="13551">MPTIEQLVRKGRQAKPKKSKTLALKGSPLRRGVCTRVYTTTPKKPNSALRKVARVRLSSGVEVTAYIPGEGHNLQEHSIVLVRGGRVKDLPGVRYHIVRGALDTQGVKDRKQGRSLYGAKKAK</sequence>
<protein>
    <recommendedName>
        <fullName evidence="2">Small ribosomal subunit protein uS12</fullName>
    </recommendedName>
    <alternativeName>
        <fullName evidence="4">30S ribosomal protein S12</fullName>
    </alternativeName>
</protein>
<comment type="function">
    <text evidence="2">With S4 and S5 plays an important role in translational accuracy.</text>
</comment>
<comment type="function">
    <text evidence="2">Interacts with and stabilizes bases of the 16S rRNA that are involved in tRNA selection in the A site and with the mRNA backbone. Located at the interface of the 30S and 50S subunits, it traverses the body of the 30S subunit contacting proteins on the other side and probably holding the rRNA structure together. The combined cluster of proteins S8, S12 and S17 appears to hold together the shoulder and platform of the 30S subunit.</text>
</comment>
<comment type="subunit">
    <text evidence="2">Part of the 30S ribosomal subunit. Contacts proteins S8 and S17. May interact with IF1 in the 30S initiation complex.</text>
</comment>
<comment type="similarity">
    <text evidence="2">Belongs to the universal ribosomal protein uS12 family.</text>
</comment>
<proteinExistence type="inferred from homology"/>
<gene>
    <name evidence="2" type="primary">rpsL</name>
    <name type="ordered locus">BAD_0530</name>
</gene>
<reference key="1">
    <citation type="submission" date="2006-12" db="EMBL/GenBank/DDBJ databases">
        <title>Bifidobacterium adolescentis complete genome sequence.</title>
        <authorList>
            <person name="Suzuki T."/>
            <person name="Tsuda Y."/>
            <person name="Kanou N."/>
            <person name="Inoue T."/>
            <person name="Kumazaki K."/>
            <person name="Nagano S."/>
            <person name="Hirai S."/>
            <person name="Tanaka K."/>
            <person name="Watanabe K."/>
        </authorList>
    </citation>
    <scope>NUCLEOTIDE SEQUENCE [LARGE SCALE GENOMIC DNA]</scope>
    <source>
        <strain>ATCC 15703 / DSM 20083 / NCTC 11814 / E194a</strain>
    </source>
</reference>
<organism>
    <name type="scientific">Bifidobacterium adolescentis (strain ATCC 15703 / DSM 20083 / NCTC 11814 / E194a)</name>
    <dbReference type="NCBI Taxonomy" id="367928"/>
    <lineage>
        <taxon>Bacteria</taxon>
        <taxon>Bacillati</taxon>
        <taxon>Actinomycetota</taxon>
        <taxon>Actinomycetes</taxon>
        <taxon>Bifidobacteriales</taxon>
        <taxon>Bifidobacteriaceae</taxon>
        <taxon>Bifidobacterium</taxon>
    </lineage>
</organism>
<name>RS12_BIFAA</name>
<keyword id="KW-0488">Methylation</keyword>
<keyword id="KW-1185">Reference proteome</keyword>
<keyword id="KW-0687">Ribonucleoprotein</keyword>
<keyword id="KW-0689">Ribosomal protein</keyword>
<keyword id="KW-0694">RNA-binding</keyword>
<keyword id="KW-0699">rRNA-binding</keyword>
<keyword id="KW-0820">tRNA-binding</keyword>
<evidence type="ECO:0000250" key="1"/>
<evidence type="ECO:0000255" key="2">
    <source>
        <dbReference type="HAMAP-Rule" id="MF_00403"/>
    </source>
</evidence>
<evidence type="ECO:0000256" key="3">
    <source>
        <dbReference type="SAM" id="MobiDB-lite"/>
    </source>
</evidence>
<evidence type="ECO:0000305" key="4"/>
<feature type="chain" id="PRO_0000295956" description="Small ribosomal subunit protein uS12">
    <location>
        <begin position="1"/>
        <end position="123"/>
    </location>
</feature>
<feature type="region of interest" description="Disordered" evidence="3">
    <location>
        <begin position="1"/>
        <end position="21"/>
    </location>
</feature>
<feature type="compositionally biased region" description="Basic residues" evidence="3">
    <location>
        <begin position="9"/>
        <end position="20"/>
    </location>
</feature>
<feature type="modified residue" description="3-methylthioaspartic acid" evidence="1">
    <location>
        <position position="89"/>
    </location>
</feature>
<accession>A1A0S8</accession>